<gene>
    <name type="primary">ND4</name>
</gene>
<dbReference type="EC" id="7.1.1.2"/>
<dbReference type="EMBL" id="U24570">
    <property type="protein sequence ID" value="AAC46873.1"/>
    <property type="molecule type" value="Genomic_DNA"/>
</dbReference>
<dbReference type="PIR" id="S58994">
    <property type="entry name" value="S58994"/>
</dbReference>
<dbReference type="SMR" id="Q34949"/>
<dbReference type="GO" id="GO:0031966">
    <property type="term" value="C:mitochondrial membrane"/>
    <property type="evidence" value="ECO:0007669"/>
    <property type="project" value="UniProtKB-SubCell"/>
</dbReference>
<dbReference type="GO" id="GO:0008137">
    <property type="term" value="F:NADH dehydrogenase (ubiquinone) activity"/>
    <property type="evidence" value="ECO:0007669"/>
    <property type="project" value="UniProtKB-EC"/>
</dbReference>
<dbReference type="GO" id="GO:0048039">
    <property type="term" value="F:ubiquinone binding"/>
    <property type="evidence" value="ECO:0007669"/>
    <property type="project" value="TreeGrafter"/>
</dbReference>
<dbReference type="GO" id="GO:0042773">
    <property type="term" value="P:ATP synthesis coupled electron transport"/>
    <property type="evidence" value="ECO:0007669"/>
    <property type="project" value="InterPro"/>
</dbReference>
<dbReference type="GO" id="GO:0015990">
    <property type="term" value="P:electron transport coupled proton transport"/>
    <property type="evidence" value="ECO:0007669"/>
    <property type="project" value="TreeGrafter"/>
</dbReference>
<dbReference type="InterPro" id="IPR000260">
    <property type="entry name" value="NADH4_N"/>
</dbReference>
<dbReference type="InterPro" id="IPR003918">
    <property type="entry name" value="NADH_UbQ_OxRdtase"/>
</dbReference>
<dbReference type="InterPro" id="IPR001750">
    <property type="entry name" value="ND/Mrp_TM"/>
</dbReference>
<dbReference type="PANTHER" id="PTHR43507">
    <property type="entry name" value="NADH-UBIQUINONE OXIDOREDUCTASE CHAIN 4"/>
    <property type="match status" value="1"/>
</dbReference>
<dbReference type="PANTHER" id="PTHR43507:SF20">
    <property type="entry name" value="NADH-UBIQUINONE OXIDOREDUCTASE CHAIN 4"/>
    <property type="match status" value="1"/>
</dbReference>
<dbReference type="Pfam" id="PF01059">
    <property type="entry name" value="Oxidored_q5_N"/>
    <property type="match status" value="1"/>
</dbReference>
<dbReference type="Pfam" id="PF00361">
    <property type="entry name" value="Proton_antipo_M"/>
    <property type="match status" value="1"/>
</dbReference>
<dbReference type="PRINTS" id="PR01437">
    <property type="entry name" value="NUOXDRDTASE4"/>
</dbReference>
<feature type="chain" id="PRO_0000117950" description="NADH-ubiquinone oxidoreductase chain 4">
    <location>
        <begin position="1"/>
        <end position="452"/>
    </location>
</feature>
<feature type="transmembrane region" description="Helical" evidence="2">
    <location>
        <begin position="7"/>
        <end position="27"/>
    </location>
</feature>
<feature type="transmembrane region" description="Helical" evidence="2">
    <location>
        <begin position="57"/>
        <end position="77"/>
    </location>
</feature>
<feature type="transmembrane region" description="Helical" evidence="2">
    <location>
        <begin position="95"/>
        <end position="115"/>
    </location>
</feature>
<feature type="transmembrane region" description="Helical" evidence="2">
    <location>
        <begin position="116"/>
        <end position="136"/>
    </location>
</feature>
<feature type="transmembrane region" description="Helical" evidence="2">
    <location>
        <begin position="145"/>
        <end position="165"/>
    </location>
</feature>
<feature type="transmembrane region" description="Helical" evidence="2">
    <location>
        <begin position="186"/>
        <end position="206"/>
    </location>
</feature>
<feature type="transmembrane region" description="Helical" evidence="2">
    <location>
        <begin position="218"/>
        <end position="238"/>
    </location>
</feature>
<feature type="transmembrane region" description="Helical" evidence="2">
    <location>
        <begin position="251"/>
        <end position="271"/>
    </location>
</feature>
<feature type="transmembrane region" description="Helical" evidence="2">
    <location>
        <begin position="278"/>
        <end position="298"/>
    </location>
</feature>
<feature type="transmembrane region" description="Helical" evidence="2">
    <location>
        <begin position="303"/>
        <end position="323"/>
    </location>
</feature>
<feature type="transmembrane region" description="Helical" evidence="2">
    <location>
        <begin position="336"/>
        <end position="356"/>
    </location>
</feature>
<feature type="transmembrane region" description="Helical" evidence="2">
    <location>
        <begin position="360"/>
        <end position="380"/>
    </location>
</feature>
<feature type="transmembrane region" description="Helical" evidence="2">
    <location>
        <begin position="386"/>
        <end position="406"/>
    </location>
</feature>
<feature type="transmembrane region" description="Helical" evidence="2">
    <location>
        <begin position="428"/>
        <end position="448"/>
    </location>
</feature>
<keyword id="KW-0249">Electron transport</keyword>
<keyword id="KW-0472">Membrane</keyword>
<keyword id="KW-0496">Mitochondrion</keyword>
<keyword id="KW-0520">NAD</keyword>
<keyword id="KW-0679">Respiratory chain</keyword>
<keyword id="KW-1278">Translocase</keyword>
<keyword id="KW-0812">Transmembrane</keyword>
<keyword id="KW-1133">Transmembrane helix</keyword>
<keyword id="KW-0813">Transport</keyword>
<keyword id="KW-0830">Ubiquinone</keyword>
<protein>
    <recommendedName>
        <fullName>NADH-ubiquinone oxidoreductase chain 4</fullName>
        <ecNumber>7.1.1.2</ecNumber>
    </recommendedName>
    <alternativeName>
        <fullName>NADH dehydrogenase subunit 4</fullName>
    </alternativeName>
</protein>
<name>NU4M_LUMTE</name>
<accession>Q34949</accession>
<reference key="1">
    <citation type="journal article" date="1995" name="Genetics">
        <title>Complete sequence of the mitochondrial DNA of the annelid worm Lumbricus terrestris.</title>
        <authorList>
            <person name="Boore J.L."/>
            <person name="Brown W.M."/>
        </authorList>
    </citation>
    <scope>NUCLEOTIDE SEQUENCE [GENOMIC DNA]</scope>
</reference>
<comment type="function">
    <text evidence="1">Core subunit of the mitochondrial membrane respiratory chain NADH dehydrogenase (Complex I) that is believed to belong to the minimal assembly required for catalysis. Complex I functions in the transfer of electrons from NADH to the respiratory chain. The immediate electron acceptor for the enzyme is believed to be ubiquinone (By similarity).</text>
</comment>
<comment type="catalytic activity">
    <reaction>
        <text>a ubiquinone + NADH + 5 H(+)(in) = a ubiquinol + NAD(+) + 4 H(+)(out)</text>
        <dbReference type="Rhea" id="RHEA:29091"/>
        <dbReference type="Rhea" id="RHEA-COMP:9565"/>
        <dbReference type="Rhea" id="RHEA-COMP:9566"/>
        <dbReference type="ChEBI" id="CHEBI:15378"/>
        <dbReference type="ChEBI" id="CHEBI:16389"/>
        <dbReference type="ChEBI" id="CHEBI:17976"/>
        <dbReference type="ChEBI" id="CHEBI:57540"/>
        <dbReference type="ChEBI" id="CHEBI:57945"/>
        <dbReference type="EC" id="7.1.1.2"/>
    </reaction>
</comment>
<comment type="subcellular location">
    <subcellularLocation>
        <location evidence="1">Mitochondrion membrane</location>
        <topology evidence="1">Multi-pass membrane protein</topology>
    </subcellularLocation>
</comment>
<comment type="similarity">
    <text evidence="3">Belongs to the complex I subunit 4 family.</text>
</comment>
<sequence length="452" mass="50483">MLKLQMVLMSLLLLPLIVNLYPWIIALTLSALLLPTCFNLVNSASYSMFTEYMSSDMMSFTLSALTIWVTVMMILASTKIMHLNMYPKMFMTNLVILLIILINCFLSPNLIMFYIWFEASLIPTMVLIMTWGYQPERSQASMYLMIYTVAASLPMLMVLCKIFIVSKTAMMPMFMNMEFPMDYPSMALAWVLTLGGFLVKLPMFTVHLWLPKAHVEAPIAGSMILAAILLKLGGYGILRMLSLFHYMAKSTSSLLSSVALVGAVSTSLICLRQSDLKSLIAYSSVGHMGLMVAGALMSSNWGFQAALAMMIAHGLSSSALFVMANMNYELTHTRSLFLMKGLLVLAPTLTMWWFLFTASNMAAPPSINLLSEIMLITSILKMSTSAFILLGLTSFFTAAYCLYMYTSMHHGPLMLTSNPIPQFKVKDLTLMTMHLVPTILIIFKPELITSWS</sequence>
<organism>
    <name type="scientific">Lumbricus terrestris</name>
    <name type="common">Common earthworm</name>
    <dbReference type="NCBI Taxonomy" id="6398"/>
    <lineage>
        <taxon>Eukaryota</taxon>
        <taxon>Metazoa</taxon>
        <taxon>Spiralia</taxon>
        <taxon>Lophotrochozoa</taxon>
        <taxon>Annelida</taxon>
        <taxon>Clitellata</taxon>
        <taxon>Oligochaeta</taxon>
        <taxon>Crassiclitellata</taxon>
        <taxon>Lumbricina</taxon>
        <taxon>Lumbricidae</taxon>
        <taxon>Lumbricinae</taxon>
        <taxon>Lumbricus</taxon>
    </lineage>
</organism>
<proteinExistence type="inferred from homology"/>
<evidence type="ECO:0000250" key="1"/>
<evidence type="ECO:0000255" key="2"/>
<evidence type="ECO:0000305" key="3"/>
<geneLocation type="mitochondrion"/>